<organism evidence="14">
    <name type="scientific">Plasmodium berghei (strain Anka)</name>
    <dbReference type="NCBI Taxonomy" id="5823"/>
    <lineage>
        <taxon>Eukaryota</taxon>
        <taxon>Sar</taxon>
        <taxon>Alveolata</taxon>
        <taxon>Apicomplexa</taxon>
        <taxon>Aconoidasida</taxon>
        <taxon>Haemosporida</taxon>
        <taxon>Plasmodiidae</taxon>
        <taxon>Plasmodium</taxon>
        <taxon>Plasmodium (Vinckeia)</taxon>
    </lineage>
</organism>
<comment type="function">
    <text evidence="1 2 10 11 12">Functions in the early steps of protein synthesis by forming a ternary complex with GTP and initiator tRNA (By similarity). May regulate protein translation in response to amino acid starvation (By similarity). May regulate protein at various stages of parasite development (Probable).</text>
</comment>
<comment type="subcellular location">
    <subcellularLocation>
        <location evidence="5">Cytoplasm</location>
        <location evidence="5">Stress granule</location>
    </subcellularLocation>
    <text evidence="2 5">When phosphorylated at Ser-59, localizes to stress granules in schizonts and male and female gametocytes (By similarity). When phosphorylated at Ser-59, localizes to stress granules in mosquito salivary glands (PubMed:20584882).</text>
</comment>
<comment type="developmental stage">
    <text evidence="5 6 7">Expressed during the asexual blood stage, including rings, trophozoites, schizonts (at protein level) (PubMed:22355110, PubMed:29241041). Expressed in male and female gametocytes (at protein level) (PubMed:22355110). Expressed in sporozoites from the mosquito midgut, hemocoel, and salivary glands (at protein level) (PubMed:20584882).</text>
</comment>
<comment type="PTM">
    <text evidence="2 5 6 7 8">Phosphorylates at Ser-59 in mature trophozoites, schizonts and gametocytes but not in rings and young trophozoites (PubMed:22355110, PubMed:29241041). Phosphorylates at Ser-59 by eIK2 in salivary gland sporozoites but not in midgut and hemocoel sporozoites (PubMed:20584882). Dephosphorylated at Ser-59 by UIS2 (By similarity). Phosphorylation of eIF2alpha subunit of the pre-initiation complex eIF2 inhibits recycling of inactive eIF2-GDP to active eIF2-GTP by limiting the activity of the guanine nucleotide exchange factor eIF2B and thus, inhibits protein translation (PubMed:20584882).</text>
</comment>
<comment type="similarity">
    <text evidence="9">Belongs to the eIF-2-alpha family.</text>
</comment>
<proteinExistence type="evidence at protein level"/>
<reference evidence="14" key="1">
    <citation type="journal article" date="2014" name="BMC Biol.">
        <title>A comprehensive evaluation of rodent malaria parasite genomes and gene expression.</title>
        <authorList>
            <person name="Otto T.D."/>
            <person name="Bohme U."/>
            <person name="Jackson A.P."/>
            <person name="Hunt M."/>
            <person name="Franke-Fayard B."/>
            <person name="Hoeijmakers W.A."/>
            <person name="Religa A.A."/>
            <person name="Robertson L."/>
            <person name="Sanders M."/>
            <person name="Ogun S.A."/>
            <person name="Cunningham D."/>
            <person name="Erhart A."/>
            <person name="Billker O."/>
            <person name="Khan S.M."/>
            <person name="Stunnenberg H.G."/>
            <person name="Langhorne J."/>
            <person name="Holder A.A."/>
            <person name="Waters A.P."/>
            <person name="Newbold C.I."/>
            <person name="Pain A."/>
            <person name="Berriman M."/>
            <person name="Janse C.J."/>
        </authorList>
    </citation>
    <scope>NUCLEOTIDE SEQUENCE [LARGE SCALE GENOMIC DNA]</scope>
    <source>
        <strain evidence="14">ANKA</strain>
    </source>
</reference>
<reference evidence="9" key="2">
    <citation type="journal article" date="2010" name="J. Exp. Med.">
        <title>The Plasmodium eukaryotic initiation factor-2alpha kinase IK2 controls the latency of sporozoites in the mosquito salivary glands.</title>
        <authorList>
            <person name="Zhang M."/>
            <person name="Fennell C."/>
            <person name="Ranford-Cartwright L."/>
            <person name="Sakthivel R."/>
            <person name="Gueirard P."/>
            <person name="Meister S."/>
            <person name="Caspi A."/>
            <person name="Doerig C."/>
            <person name="Nussenzweig R.S."/>
            <person name="Tuteja R."/>
            <person name="Sullivan W.J. Jr."/>
            <person name="Roos D.S."/>
            <person name="Fontoura B.M."/>
            <person name="Menard R."/>
            <person name="Winzeler E.A."/>
            <person name="Nussenzweig V."/>
        </authorList>
    </citation>
    <scope>FUNCTION</scope>
    <scope>SUBCELLULAR LOCATION</scope>
    <scope>DEVELOPMENTAL STAGE</scope>
    <scope>PHOSPHORYLATION AT SER-59</scope>
</reference>
<reference evidence="9" key="3">
    <citation type="journal article" date="2012" name="Proc. Natl. Acad. Sci. U.S.A.">
        <title>PK4, a eukaryotic initiation factor 2alpha(eIF2alpha) kinase, is essential for the development of the erythrocytic cycle of Plasmodium.</title>
        <authorList>
            <person name="Zhang M."/>
            <person name="Mishra S."/>
            <person name="Sakthivel R."/>
            <person name="Rojas M."/>
            <person name="Ranjan R."/>
            <person name="Sullivan W.J. Jr."/>
            <person name="Fontoura B.M."/>
            <person name="Menard R."/>
            <person name="Dever T.E."/>
            <person name="Nussenzweig V."/>
        </authorList>
    </citation>
    <scope>FUNCTION</scope>
    <scope>DEVELOPMENTAL STAGE</scope>
    <scope>PHOSPHORYLATION AT SER-59</scope>
    <scope>MUTAGENESIS OF SER-59</scope>
</reference>
<reference evidence="9" key="4">
    <citation type="journal article" date="2017" name="Cell Host Microbe">
        <title>Inhibiting the Plasmodium eIF2alpha Kinase PK4 Prevents Artemisinin-Induced Latency.</title>
        <authorList>
            <person name="Zhang M."/>
            <person name="Gallego-Delgado J."/>
            <person name="Fernandez-Arias C."/>
            <person name="Waters N.C."/>
            <person name="Rodriguez A."/>
            <person name="Tsuji M."/>
            <person name="Wek R.C."/>
            <person name="Nussenzweig V."/>
            <person name="Sullivan W.J. Jr."/>
        </authorList>
    </citation>
    <scope>FUNCTION</scope>
    <scope>DEVELOPMENTAL STAGE</scope>
    <scope>PHOSPHORYLATION AT SER-59</scope>
</reference>
<feature type="chain" id="PRO_0000456974" description="Eukaryotic translation initiation factor 2 subunit 1">
    <location>
        <begin position="1"/>
        <end position="326"/>
    </location>
</feature>
<feature type="domain" description="S1 motif" evidence="3">
    <location>
        <begin position="24"/>
        <end position="95"/>
    </location>
</feature>
<feature type="region of interest" description="Disordered" evidence="4">
    <location>
        <begin position="291"/>
        <end position="326"/>
    </location>
</feature>
<feature type="compositionally biased region" description="Acidic residues" evidence="4">
    <location>
        <begin position="298"/>
        <end position="326"/>
    </location>
</feature>
<feature type="modified residue" description="Phosphoserine; by eIK1, eIK2 and PK4" evidence="5 6 7">
    <location>
        <position position="59"/>
    </location>
</feature>
<feature type="mutagenesis site" description="Abolishes phosphorylation. Lethal at the blood stage." evidence="6">
    <original>S</original>
    <variation>A</variation>
    <location>
        <position position="59"/>
    </location>
</feature>
<feature type="mutagenesis site" description="Phosphomimetic mutant. Lethal at the blood stage." evidence="6">
    <original>S</original>
    <variation>D</variation>
    <location>
        <position position="59"/>
    </location>
</feature>
<feature type="mutagenesis site" description="Mosquito infection by gametocytes is normal leading to the generation of sporozoites that are able to infect mouse host." evidence="6">
    <original>S</original>
    <variation>T</variation>
    <location>
        <position position="59"/>
    </location>
</feature>
<evidence type="ECO:0000250" key="1">
    <source>
        <dbReference type="UniProtKB" id="P05198"/>
    </source>
</evidence>
<evidence type="ECO:0000250" key="2">
    <source>
        <dbReference type="UniProtKB" id="Q8IBH7"/>
    </source>
</evidence>
<evidence type="ECO:0000255" key="3">
    <source>
        <dbReference type="PROSITE-ProRule" id="PRU00180"/>
    </source>
</evidence>
<evidence type="ECO:0000256" key="4">
    <source>
        <dbReference type="SAM" id="MobiDB-lite"/>
    </source>
</evidence>
<evidence type="ECO:0000269" key="5">
    <source>
    </source>
</evidence>
<evidence type="ECO:0000269" key="6">
    <source>
    </source>
</evidence>
<evidence type="ECO:0000269" key="7">
    <source>
    </source>
</evidence>
<evidence type="ECO:0000303" key="8">
    <source>
    </source>
</evidence>
<evidence type="ECO:0000305" key="9"/>
<evidence type="ECO:0000305" key="10">
    <source>
    </source>
</evidence>
<evidence type="ECO:0000305" key="11">
    <source>
    </source>
</evidence>
<evidence type="ECO:0000305" key="12">
    <source>
    </source>
</evidence>
<evidence type="ECO:0000312" key="13">
    <source>
        <dbReference type="EMBL" id="VUC53995.1"/>
    </source>
</evidence>
<evidence type="ECO:0000312" key="14">
    <source>
        <dbReference type="Proteomes" id="UP000074855"/>
    </source>
</evidence>
<sequence>MGDARSKTDLGDCRFYEKKFPEVDDLIMVKVNRIEDMGAYVSILEYNDMEGMILMSELSKRRFRSVNKLIRVGRHEVVLVLRVDNQKGYIDLSKRRVSPKDIIKCEEHFSKSKKVHQTVRHVAQKHNMTVEELNRKVIWPLYKKYGHALDALKEATMNPDIIFKEMDISDAVKESLLSDIKLRLTPQALKLRGRIDVWCFGYEGIDAVKEALKKGKEISNNEVTINIKLIAPPQYVIVTSCHDKELGMQKIQEAMKVISDKIKEYKGGDFKQQGEILVIGGDDEKRLEELLDKHDGLSSDDEYSSDGDEDDSSNDDDNSSDEDDDD</sequence>
<dbReference type="EMBL" id="LK023117">
    <property type="protein sequence ID" value="VUC53995.1"/>
    <property type="molecule type" value="Genomic_DNA"/>
</dbReference>
<dbReference type="RefSeq" id="XP_675242.1">
    <property type="nucleotide sequence ID" value="XM_670150.1"/>
</dbReference>
<dbReference type="SMR" id="A0A509AJP9"/>
<dbReference type="FunCoup" id="A0A509AJP9">
    <property type="interactions" value="683"/>
</dbReference>
<dbReference type="STRING" id="5823.A0A509AJP9"/>
<dbReference type="iPTMnet" id="A0A509AJP9"/>
<dbReference type="VEuPathDB" id="PlasmoDB:PBANKA_0212100"/>
<dbReference type="InParanoid" id="A0A509AJP9"/>
<dbReference type="OMA" id="DVNEHQR"/>
<dbReference type="Proteomes" id="UP000074855">
    <property type="component" value="Chromosome 2"/>
</dbReference>
<dbReference type="GO" id="GO:0010494">
    <property type="term" value="C:cytoplasmic stress granule"/>
    <property type="evidence" value="ECO:0000315"/>
    <property type="project" value="UniProtKB"/>
</dbReference>
<dbReference type="GO" id="GO:0033290">
    <property type="term" value="C:eukaryotic 48S preinitiation complex"/>
    <property type="evidence" value="ECO:0007669"/>
    <property type="project" value="TreeGrafter"/>
</dbReference>
<dbReference type="GO" id="GO:0005850">
    <property type="term" value="C:eukaryotic translation initiation factor 2 complex"/>
    <property type="evidence" value="ECO:0000250"/>
    <property type="project" value="UniProtKB"/>
</dbReference>
<dbReference type="GO" id="GO:0043022">
    <property type="term" value="F:ribosome binding"/>
    <property type="evidence" value="ECO:0007669"/>
    <property type="project" value="TreeGrafter"/>
</dbReference>
<dbReference type="GO" id="GO:0003723">
    <property type="term" value="F:RNA binding"/>
    <property type="evidence" value="ECO:0007669"/>
    <property type="project" value="UniProtKB-KW"/>
</dbReference>
<dbReference type="GO" id="GO:0003743">
    <property type="term" value="F:translation initiation factor activity"/>
    <property type="evidence" value="ECO:0007669"/>
    <property type="project" value="UniProtKB-KW"/>
</dbReference>
<dbReference type="GO" id="GO:0006417">
    <property type="term" value="P:regulation of translation"/>
    <property type="evidence" value="ECO:0007669"/>
    <property type="project" value="UniProtKB-KW"/>
</dbReference>
<dbReference type="CDD" id="cd04452">
    <property type="entry name" value="S1_IF2_alpha"/>
    <property type="match status" value="1"/>
</dbReference>
<dbReference type="FunFam" id="3.30.70.1130:FF:000003">
    <property type="entry name" value="Eukaryotic translation initiation factor 2 alpha subunit, putative"/>
    <property type="match status" value="1"/>
</dbReference>
<dbReference type="FunFam" id="2.40.50.140:FF:000015">
    <property type="entry name" value="Eukaryotic translation initiation factor 2 subunit alpha"/>
    <property type="match status" value="1"/>
</dbReference>
<dbReference type="Gene3D" id="3.30.70.1130">
    <property type="entry name" value="EIF_2_alpha"/>
    <property type="match status" value="1"/>
</dbReference>
<dbReference type="Gene3D" id="2.40.50.140">
    <property type="entry name" value="Nucleic acid-binding proteins"/>
    <property type="match status" value="1"/>
</dbReference>
<dbReference type="Gene3D" id="1.10.150.190">
    <property type="entry name" value="Translation initiation factor 2, subunit 1, domain 2"/>
    <property type="match status" value="1"/>
</dbReference>
<dbReference type="InterPro" id="IPR012340">
    <property type="entry name" value="NA-bd_OB-fold"/>
</dbReference>
<dbReference type="InterPro" id="IPR003029">
    <property type="entry name" value="S1_domain"/>
</dbReference>
<dbReference type="InterPro" id="IPR044126">
    <property type="entry name" value="S1_IF2_alpha"/>
</dbReference>
<dbReference type="InterPro" id="IPR024055">
    <property type="entry name" value="TIF2_asu_C"/>
</dbReference>
<dbReference type="InterPro" id="IPR024054">
    <property type="entry name" value="TIF2_asu_middle_sf"/>
</dbReference>
<dbReference type="InterPro" id="IPR011488">
    <property type="entry name" value="TIF_2_asu"/>
</dbReference>
<dbReference type="PANTHER" id="PTHR10602">
    <property type="entry name" value="EUKARYOTIC TRANSLATION INITIATION FACTOR 2 SUBUNIT 1"/>
    <property type="match status" value="1"/>
</dbReference>
<dbReference type="PANTHER" id="PTHR10602:SF0">
    <property type="entry name" value="EUKARYOTIC TRANSLATION INITIATION FACTOR 2 SUBUNIT 1"/>
    <property type="match status" value="1"/>
</dbReference>
<dbReference type="Pfam" id="PF07541">
    <property type="entry name" value="EIF_2_alpha"/>
    <property type="match status" value="1"/>
</dbReference>
<dbReference type="Pfam" id="PF00575">
    <property type="entry name" value="S1"/>
    <property type="match status" value="1"/>
</dbReference>
<dbReference type="SMART" id="SM00316">
    <property type="entry name" value="S1"/>
    <property type="match status" value="1"/>
</dbReference>
<dbReference type="SUPFAM" id="SSF110993">
    <property type="entry name" value="eIF-2-alpha, C-terminal domain"/>
    <property type="match status" value="1"/>
</dbReference>
<dbReference type="SUPFAM" id="SSF116742">
    <property type="entry name" value="eIF2alpha middle domain-like"/>
    <property type="match status" value="1"/>
</dbReference>
<dbReference type="SUPFAM" id="SSF50249">
    <property type="entry name" value="Nucleic acid-binding proteins"/>
    <property type="match status" value="1"/>
</dbReference>
<dbReference type="PROSITE" id="PS50126">
    <property type="entry name" value="S1"/>
    <property type="match status" value="1"/>
</dbReference>
<accession>A0A509AJP9</accession>
<keyword id="KW-0963">Cytoplasm</keyword>
<keyword id="KW-0396">Initiation factor</keyword>
<keyword id="KW-0597">Phosphoprotein</keyword>
<keyword id="KW-0648">Protein biosynthesis</keyword>
<keyword id="KW-1185">Reference proteome</keyword>
<keyword id="KW-0694">RNA-binding</keyword>
<keyword id="KW-0810">Translation regulation</keyword>
<protein>
    <recommendedName>
        <fullName evidence="9">Eukaryotic translation initiation factor 2 subunit 1</fullName>
    </recommendedName>
    <alternativeName>
        <fullName evidence="8">Eukaryotic translation initiation factor 2 subunit alpha</fullName>
        <shortName evidence="8">PbeIF2alpha</shortName>
    </alternativeName>
</protein>
<name>IF2A_PLABA</name>
<gene>
    <name evidence="8" type="primary">eIF2alpha</name>
    <name evidence="13" type="ORF">PBANKA_0212100</name>
</gene>